<feature type="chain" id="PRO_1000198133" description="Hydroxyethylthiazole kinase 1">
    <location>
        <begin position="1"/>
        <end position="260"/>
    </location>
</feature>
<feature type="binding site" evidence="1">
    <location>
        <position position="39"/>
    </location>
    <ligand>
        <name>substrate</name>
    </ligand>
</feature>
<feature type="binding site" evidence="1">
    <location>
        <position position="115"/>
    </location>
    <ligand>
        <name>ATP</name>
        <dbReference type="ChEBI" id="CHEBI:30616"/>
    </ligand>
</feature>
<feature type="binding site" evidence="1">
    <location>
        <position position="160"/>
    </location>
    <ligand>
        <name>ATP</name>
        <dbReference type="ChEBI" id="CHEBI:30616"/>
    </ligand>
</feature>
<feature type="binding site" evidence="1">
    <location>
        <position position="187"/>
    </location>
    <ligand>
        <name>substrate</name>
    </ligand>
</feature>
<accession>C1CJG8</accession>
<organism>
    <name type="scientific">Streptococcus pneumoniae (strain P1031)</name>
    <dbReference type="NCBI Taxonomy" id="488223"/>
    <lineage>
        <taxon>Bacteria</taxon>
        <taxon>Bacillati</taxon>
        <taxon>Bacillota</taxon>
        <taxon>Bacilli</taxon>
        <taxon>Lactobacillales</taxon>
        <taxon>Streptococcaceae</taxon>
        <taxon>Streptococcus</taxon>
    </lineage>
</organism>
<protein>
    <recommendedName>
        <fullName evidence="1">Hydroxyethylthiazole kinase 1</fullName>
        <ecNumber evidence="1">2.7.1.50</ecNumber>
    </recommendedName>
    <alternativeName>
        <fullName evidence="1">4-methyl-5-beta-hydroxyethylthiazole kinase 1</fullName>
        <shortName evidence="1">TH kinase 1</shortName>
        <shortName evidence="1">Thz kinase 1</shortName>
    </alternativeName>
</protein>
<dbReference type="EC" id="2.7.1.50" evidence="1"/>
<dbReference type="EMBL" id="CP000920">
    <property type="protein sequence ID" value="ACO20231.1"/>
    <property type="molecule type" value="Genomic_DNA"/>
</dbReference>
<dbReference type="SMR" id="C1CJG8"/>
<dbReference type="KEGG" id="spp:SPP_0728"/>
<dbReference type="HOGENOM" id="CLU_019943_0_2_9"/>
<dbReference type="UniPathway" id="UPA00060">
    <property type="reaction ID" value="UER00139"/>
</dbReference>
<dbReference type="GO" id="GO:0005524">
    <property type="term" value="F:ATP binding"/>
    <property type="evidence" value="ECO:0007669"/>
    <property type="project" value="UniProtKB-UniRule"/>
</dbReference>
<dbReference type="GO" id="GO:0004417">
    <property type="term" value="F:hydroxyethylthiazole kinase activity"/>
    <property type="evidence" value="ECO:0007669"/>
    <property type="project" value="UniProtKB-UniRule"/>
</dbReference>
<dbReference type="GO" id="GO:0000287">
    <property type="term" value="F:magnesium ion binding"/>
    <property type="evidence" value="ECO:0007669"/>
    <property type="project" value="UniProtKB-UniRule"/>
</dbReference>
<dbReference type="GO" id="GO:0009228">
    <property type="term" value="P:thiamine biosynthetic process"/>
    <property type="evidence" value="ECO:0007669"/>
    <property type="project" value="UniProtKB-KW"/>
</dbReference>
<dbReference type="GO" id="GO:0009229">
    <property type="term" value="P:thiamine diphosphate biosynthetic process"/>
    <property type="evidence" value="ECO:0007669"/>
    <property type="project" value="UniProtKB-UniRule"/>
</dbReference>
<dbReference type="CDD" id="cd01170">
    <property type="entry name" value="THZ_kinase"/>
    <property type="match status" value="1"/>
</dbReference>
<dbReference type="Gene3D" id="3.40.1190.20">
    <property type="match status" value="1"/>
</dbReference>
<dbReference type="HAMAP" id="MF_00228">
    <property type="entry name" value="Thz_kinase"/>
    <property type="match status" value="1"/>
</dbReference>
<dbReference type="InterPro" id="IPR000417">
    <property type="entry name" value="Hyethyz_kinase"/>
</dbReference>
<dbReference type="InterPro" id="IPR029056">
    <property type="entry name" value="Ribokinase-like"/>
</dbReference>
<dbReference type="NCBIfam" id="NF006830">
    <property type="entry name" value="PRK09355.1"/>
    <property type="match status" value="1"/>
</dbReference>
<dbReference type="NCBIfam" id="TIGR00694">
    <property type="entry name" value="thiM"/>
    <property type="match status" value="1"/>
</dbReference>
<dbReference type="Pfam" id="PF02110">
    <property type="entry name" value="HK"/>
    <property type="match status" value="1"/>
</dbReference>
<dbReference type="PIRSF" id="PIRSF000513">
    <property type="entry name" value="Thz_kinase"/>
    <property type="match status" value="1"/>
</dbReference>
<dbReference type="PRINTS" id="PR01099">
    <property type="entry name" value="HYETHTZKNASE"/>
</dbReference>
<dbReference type="SUPFAM" id="SSF53613">
    <property type="entry name" value="Ribokinase-like"/>
    <property type="match status" value="1"/>
</dbReference>
<proteinExistence type="inferred from homology"/>
<reference key="1">
    <citation type="journal article" date="2010" name="Genome Biol.">
        <title>Structure and dynamics of the pan-genome of Streptococcus pneumoniae and closely related species.</title>
        <authorList>
            <person name="Donati C."/>
            <person name="Hiller N.L."/>
            <person name="Tettelin H."/>
            <person name="Muzzi A."/>
            <person name="Croucher N.J."/>
            <person name="Angiuoli S.V."/>
            <person name="Oggioni M."/>
            <person name="Dunning Hotopp J.C."/>
            <person name="Hu F.Z."/>
            <person name="Riley D.R."/>
            <person name="Covacci A."/>
            <person name="Mitchell T.J."/>
            <person name="Bentley S.D."/>
            <person name="Kilian M."/>
            <person name="Ehrlich G.D."/>
            <person name="Rappuoli R."/>
            <person name="Moxon E.R."/>
            <person name="Masignani V."/>
        </authorList>
    </citation>
    <scope>NUCLEOTIDE SEQUENCE [LARGE SCALE GENOMIC DNA]</scope>
    <source>
        <strain>P1031</strain>
    </source>
</reference>
<name>THIM1_STRZP</name>
<gene>
    <name evidence="1" type="primary">thiM1</name>
    <name type="ordered locus">SPP_0728</name>
</gene>
<comment type="function">
    <text evidence="1">Catalyzes the phosphorylation of the hydroxyl group of 4-methyl-5-beta-hydroxyethylthiazole (THZ).</text>
</comment>
<comment type="catalytic activity">
    <reaction evidence="1">
        <text>5-(2-hydroxyethyl)-4-methylthiazole + ATP = 4-methyl-5-(2-phosphooxyethyl)-thiazole + ADP + H(+)</text>
        <dbReference type="Rhea" id="RHEA:24212"/>
        <dbReference type="ChEBI" id="CHEBI:15378"/>
        <dbReference type="ChEBI" id="CHEBI:17957"/>
        <dbReference type="ChEBI" id="CHEBI:30616"/>
        <dbReference type="ChEBI" id="CHEBI:58296"/>
        <dbReference type="ChEBI" id="CHEBI:456216"/>
        <dbReference type="EC" id="2.7.1.50"/>
    </reaction>
</comment>
<comment type="cofactor">
    <cofactor evidence="1">
        <name>Mg(2+)</name>
        <dbReference type="ChEBI" id="CHEBI:18420"/>
    </cofactor>
</comment>
<comment type="pathway">
    <text evidence="1">Cofactor biosynthesis; thiamine diphosphate biosynthesis; 4-methyl-5-(2-phosphoethyl)-thiazole from 5-(2-hydroxyethyl)-4-methylthiazole: step 1/1.</text>
</comment>
<comment type="similarity">
    <text evidence="1">Belongs to the Thz kinase family.</text>
</comment>
<keyword id="KW-0067">ATP-binding</keyword>
<keyword id="KW-0418">Kinase</keyword>
<keyword id="KW-0460">Magnesium</keyword>
<keyword id="KW-0479">Metal-binding</keyword>
<keyword id="KW-0547">Nucleotide-binding</keyword>
<keyword id="KW-0784">Thiamine biosynthesis</keyword>
<keyword id="KW-0808">Transferase</keyword>
<evidence type="ECO:0000255" key="1">
    <source>
        <dbReference type="HAMAP-Rule" id="MF_00228"/>
    </source>
</evidence>
<sequence>MTSLKLLKEKAPLVICITNDVVKNFTANGLVALGASPAMSEFPADLEDLLKYAGGLLINIGTLTDENWKLYQAALKIAEKYNVPAVLDPVACGAGEYRKKVADDLINNYKLAAIRGNAGEIASLVGIDVASKGVDSAGVDNIDEIALAANEKFNIPIVVTGEVDAIAVNGEVVTIHNGSAMMPKVIGTGCLLGAVVASFIGLEKGQELKSLETAMLVYNIAGEMAEKRPNGHLPGTFKVEFINALYEITDEDVKKFKRVK</sequence>